<accession>Q92M14</accession>
<dbReference type="EC" id="2.4.1.18" evidence="1"/>
<dbReference type="EMBL" id="AL591688">
    <property type="protein sequence ID" value="CAC47423.1"/>
    <property type="molecule type" value="Genomic_DNA"/>
</dbReference>
<dbReference type="RefSeq" id="NP_386950.1">
    <property type="nucleotide sequence ID" value="NC_003047.1"/>
</dbReference>
<dbReference type="SMR" id="Q92M14"/>
<dbReference type="CAZy" id="CBM48">
    <property type="family name" value="Carbohydrate-Binding Module Family 48"/>
</dbReference>
<dbReference type="CAZy" id="GH13">
    <property type="family name" value="Glycoside Hydrolase Family 13"/>
</dbReference>
<dbReference type="EnsemblBacteria" id="CAC47423">
    <property type="protein sequence ID" value="CAC47423"/>
    <property type="gene ID" value="SMc03922"/>
</dbReference>
<dbReference type="KEGG" id="sme:SMc03922"/>
<dbReference type="PATRIC" id="fig|266834.11.peg.4363"/>
<dbReference type="eggNOG" id="COG0296">
    <property type="taxonomic scope" value="Bacteria"/>
</dbReference>
<dbReference type="HOGENOM" id="CLU_004245_3_2_5"/>
<dbReference type="OrthoDB" id="9800174at2"/>
<dbReference type="UniPathway" id="UPA00164"/>
<dbReference type="Proteomes" id="UP000001976">
    <property type="component" value="Chromosome"/>
</dbReference>
<dbReference type="GO" id="GO:0005829">
    <property type="term" value="C:cytosol"/>
    <property type="evidence" value="ECO:0007669"/>
    <property type="project" value="TreeGrafter"/>
</dbReference>
<dbReference type="GO" id="GO:0003844">
    <property type="term" value="F:1,4-alpha-glucan branching enzyme activity"/>
    <property type="evidence" value="ECO:0007669"/>
    <property type="project" value="UniProtKB-UniRule"/>
</dbReference>
<dbReference type="GO" id="GO:0043169">
    <property type="term" value="F:cation binding"/>
    <property type="evidence" value="ECO:0007669"/>
    <property type="project" value="InterPro"/>
</dbReference>
<dbReference type="GO" id="GO:0004553">
    <property type="term" value="F:hydrolase activity, hydrolyzing O-glycosyl compounds"/>
    <property type="evidence" value="ECO:0007669"/>
    <property type="project" value="InterPro"/>
</dbReference>
<dbReference type="GO" id="GO:0005978">
    <property type="term" value="P:glycogen biosynthetic process"/>
    <property type="evidence" value="ECO:0007669"/>
    <property type="project" value="UniProtKB-UniRule"/>
</dbReference>
<dbReference type="CDD" id="cd11322">
    <property type="entry name" value="AmyAc_Glg_BE"/>
    <property type="match status" value="1"/>
</dbReference>
<dbReference type="CDD" id="cd02855">
    <property type="entry name" value="E_set_GBE_prok_N"/>
    <property type="match status" value="1"/>
</dbReference>
<dbReference type="FunFam" id="2.60.40.10:FF:000169">
    <property type="entry name" value="1,4-alpha-glucan branching enzyme GlgB"/>
    <property type="match status" value="1"/>
</dbReference>
<dbReference type="FunFam" id="2.60.40.1180:FF:000002">
    <property type="entry name" value="1,4-alpha-glucan branching enzyme GlgB"/>
    <property type="match status" value="1"/>
</dbReference>
<dbReference type="FunFam" id="3.20.20.80:FF:000003">
    <property type="entry name" value="1,4-alpha-glucan branching enzyme GlgB"/>
    <property type="match status" value="1"/>
</dbReference>
<dbReference type="Gene3D" id="3.20.20.80">
    <property type="entry name" value="Glycosidases"/>
    <property type="match status" value="1"/>
</dbReference>
<dbReference type="Gene3D" id="2.60.40.1180">
    <property type="entry name" value="Golgi alpha-mannosidase II"/>
    <property type="match status" value="1"/>
</dbReference>
<dbReference type="Gene3D" id="2.60.40.10">
    <property type="entry name" value="Immunoglobulins"/>
    <property type="match status" value="2"/>
</dbReference>
<dbReference type="HAMAP" id="MF_00685">
    <property type="entry name" value="GlgB"/>
    <property type="match status" value="1"/>
</dbReference>
<dbReference type="InterPro" id="IPR006048">
    <property type="entry name" value="A-amylase/branching_C"/>
</dbReference>
<dbReference type="InterPro" id="IPR037439">
    <property type="entry name" value="Branching_enzy"/>
</dbReference>
<dbReference type="InterPro" id="IPR006407">
    <property type="entry name" value="GlgB"/>
</dbReference>
<dbReference type="InterPro" id="IPR054169">
    <property type="entry name" value="GlgB_N"/>
</dbReference>
<dbReference type="InterPro" id="IPR044143">
    <property type="entry name" value="GlgB_N_E_set_prok"/>
</dbReference>
<dbReference type="InterPro" id="IPR006047">
    <property type="entry name" value="Glyco_hydro_13_cat_dom"/>
</dbReference>
<dbReference type="InterPro" id="IPR004193">
    <property type="entry name" value="Glyco_hydro_13_N"/>
</dbReference>
<dbReference type="InterPro" id="IPR013780">
    <property type="entry name" value="Glyco_hydro_b"/>
</dbReference>
<dbReference type="InterPro" id="IPR017853">
    <property type="entry name" value="Glycoside_hydrolase_SF"/>
</dbReference>
<dbReference type="InterPro" id="IPR013783">
    <property type="entry name" value="Ig-like_fold"/>
</dbReference>
<dbReference type="InterPro" id="IPR014756">
    <property type="entry name" value="Ig_E-set"/>
</dbReference>
<dbReference type="NCBIfam" id="TIGR01515">
    <property type="entry name" value="branching_enzym"/>
    <property type="match status" value="1"/>
</dbReference>
<dbReference type="NCBIfam" id="NF003811">
    <property type="entry name" value="PRK05402.1"/>
    <property type="match status" value="1"/>
</dbReference>
<dbReference type="NCBIfam" id="NF008967">
    <property type="entry name" value="PRK12313.1"/>
    <property type="match status" value="1"/>
</dbReference>
<dbReference type="PANTHER" id="PTHR43651">
    <property type="entry name" value="1,4-ALPHA-GLUCAN-BRANCHING ENZYME"/>
    <property type="match status" value="1"/>
</dbReference>
<dbReference type="PANTHER" id="PTHR43651:SF3">
    <property type="entry name" value="1,4-ALPHA-GLUCAN-BRANCHING ENZYME"/>
    <property type="match status" value="1"/>
</dbReference>
<dbReference type="Pfam" id="PF00128">
    <property type="entry name" value="Alpha-amylase"/>
    <property type="match status" value="1"/>
</dbReference>
<dbReference type="Pfam" id="PF02806">
    <property type="entry name" value="Alpha-amylase_C"/>
    <property type="match status" value="1"/>
</dbReference>
<dbReference type="Pfam" id="PF02922">
    <property type="entry name" value="CBM_48"/>
    <property type="match status" value="1"/>
</dbReference>
<dbReference type="Pfam" id="PF22019">
    <property type="entry name" value="GlgB_N"/>
    <property type="match status" value="1"/>
</dbReference>
<dbReference type="PIRSF" id="PIRSF000463">
    <property type="entry name" value="GlgB"/>
    <property type="match status" value="1"/>
</dbReference>
<dbReference type="SMART" id="SM00642">
    <property type="entry name" value="Aamy"/>
    <property type="match status" value="1"/>
</dbReference>
<dbReference type="SUPFAM" id="SSF51445">
    <property type="entry name" value="(Trans)glycosidases"/>
    <property type="match status" value="1"/>
</dbReference>
<dbReference type="SUPFAM" id="SSF81296">
    <property type="entry name" value="E set domains"/>
    <property type="match status" value="2"/>
</dbReference>
<dbReference type="SUPFAM" id="SSF51011">
    <property type="entry name" value="Glycosyl hydrolase domain"/>
    <property type="match status" value="1"/>
</dbReference>
<gene>
    <name evidence="1" type="primary">glgB</name>
    <name type="ordered locus">R02844</name>
    <name type="ORF">SMc03922</name>
</gene>
<protein>
    <recommendedName>
        <fullName evidence="1">1,4-alpha-glucan branching enzyme GlgB</fullName>
        <ecNumber evidence="1">2.4.1.18</ecNumber>
    </recommendedName>
    <alternativeName>
        <fullName evidence="1">1,4-alpha-D-glucan:1,4-alpha-D-glucan 6-glucosyl-transferase</fullName>
    </alternativeName>
    <alternativeName>
        <fullName evidence="1">Alpha-(1-&gt;4)-glucan branching enzyme</fullName>
    </alternativeName>
    <alternativeName>
        <fullName evidence="1">Glycogen branching enzyme</fullName>
        <shortName evidence="1">BE</shortName>
    </alternativeName>
</protein>
<organism>
    <name type="scientific">Rhizobium meliloti (strain 1021)</name>
    <name type="common">Ensifer meliloti</name>
    <name type="synonym">Sinorhizobium meliloti</name>
    <dbReference type="NCBI Taxonomy" id="266834"/>
    <lineage>
        <taxon>Bacteria</taxon>
        <taxon>Pseudomonadati</taxon>
        <taxon>Pseudomonadota</taxon>
        <taxon>Alphaproteobacteria</taxon>
        <taxon>Hyphomicrobiales</taxon>
        <taxon>Rhizobiaceae</taxon>
        <taxon>Sinorhizobium/Ensifer group</taxon>
        <taxon>Sinorhizobium</taxon>
    </lineage>
</organism>
<comment type="function">
    <text evidence="1">Catalyzes the formation of the alpha-1,6-glucosidic linkages in glycogen by scission of a 1,4-alpha-linked oligosaccharide from growing alpha-1,4-glucan chains and the subsequent attachment of the oligosaccharide to the alpha-1,6 position.</text>
</comment>
<comment type="catalytic activity">
    <reaction evidence="1">
        <text>Transfers a segment of a (1-&gt;4)-alpha-D-glucan chain to a primary hydroxy group in a similar glucan chain.</text>
        <dbReference type="EC" id="2.4.1.18"/>
    </reaction>
</comment>
<comment type="pathway">
    <text evidence="1">Glycan biosynthesis; glycogen biosynthesis.</text>
</comment>
<comment type="subunit">
    <text evidence="1">Monomer.</text>
</comment>
<comment type="similarity">
    <text evidence="1">Belongs to the glycosyl hydrolase 13 family. GlgB subfamily.</text>
</comment>
<feature type="chain" id="PRO_0000188735" description="1,4-alpha-glucan branching enzyme GlgB">
    <location>
        <begin position="1"/>
        <end position="736"/>
    </location>
</feature>
<feature type="active site" description="Nucleophile" evidence="1">
    <location>
        <position position="419"/>
    </location>
</feature>
<feature type="active site" description="Proton donor" evidence="1">
    <location>
        <position position="472"/>
    </location>
</feature>
<sequence length="736" mass="83388">MTVPPGKDPAPAPPGMLPAPEIAAILSGTHSNPFAVLGVHAAGKTYVARCFVPGAETVIAETLSGKELGTLERRDEAGFFEGPVALRKEQPIRYRARNDGGEWTVIDPYSFGPVLGPMDDYYIREGSHLRLFDKMGAHPIRHDGAEGFHFAVWAPNARRVSVVGSFNDWDGRRHVMRLRVDTGIWEIFIPGVPVGTPYKYEIVDSNGTLLPLKADPFARRSELRPDTASMTADEIAQNWEDEAHRRHWAEIDPRRQPISIYEVHAASWQRRDNGDMLTWDELAERLIPYCVDMGFTHIEFLPISEYPYDPSWGYQTTGLYAPTARFGEPEGFARFVNGCHKVGIGVILDWVPAHFPTDEHGLRWFDGTALYEHADPRQGFHPDWNTAIYNFGRQEVVAFLVNNALYWAEKFHVDGLRVDAVASMLYLDYSRKHGEWVPNEYGGNENLEAVRFLQTMNTRIYGIHQGVLTIAEESTSWPKVSHPVHAGGLGFGFKWNMGFMHDTLQYLSREPVHRKFHHNDMTFGLLYAFSENFVLPLSHDEVVHGKGSLIAKMAGDDWQKFANLRAYYGFMWGYPGKKLLFMGQEFAQWREWSEDRGLDWNLLEYNLHEGMRRLVRDLNGTYRSKPALHARDCEGDGFEWLIADDRENSVFAWLRKAPGEKLVAVVTNFTPVYREHYDIPLPVAGRWKEVLNTDAEIYGGSGKGNGGAVHAEKRANGETIATITLPPLATLMLEQD</sequence>
<proteinExistence type="inferred from homology"/>
<keyword id="KW-0119">Carbohydrate metabolism</keyword>
<keyword id="KW-0320">Glycogen biosynthesis</keyword>
<keyword id="KW-0321">Glycogen metabolism</keyword>
<keyword id="KW-0328">Glycosyltransferase</keyword>
<keyword id="KW-1185">Reference proteome</keyword>
<keyword id="KW-0808">Transferase</keyword>
<evidence type="ECO:0000255" key="1">
    <source>
        <dbReference type="HAMAP-Rule" id="MF_00685"/>
    </source>
</evidence>
<reference key="1">
    <citation type="journal article" date="2001" name="Proc. Natl. Acad. Sci. U.S.A.">
        <title>Analysis of the chromosome sequence of the legume symbiont Sinorhizobium meliloti strain 1021.</title>
        <authorList>
            <person name="Capela D."/>
            <person name="Barloy-Hubler F."/>
            <person name="Gouzy J."/>
            <person name="Bothe G."/>
            <person name="Ampe F."/>
            <person name="Batut J."/>
            <person name="Boistard P."/>
            <person name="Becker A."/>
            <person name="Boutry M."/>
            <person name="Cadieu E."/>
            <person name="Dreano S."/>
            <person name="Gloux S."/>
            <person name="Godrie T."/>
            <person name="Goffeau A."/>
            <person name="Kahn D."/>
            <person name="Kiss E."/>
            <person name="Lelaure V."/>
            <person name="Masuy D."/>
            <person name="Pohl T."/>
            <person name="Portetelle D."/>
            <person name="Puehler A."/>
            <person name="Purnelle B."/>
            <person name="Ramsperger U."/>
            <person name="Renard C."/>
            <person name="Thebault P."/>
            <person name="Vandenbol M."/>
            <person name="Weidner S."/>
            <person name="Galibert F."/>
        </authorList>
    </citation>
    <scope>NUCLEOTIDE SEQUENCE [LARGE SCALE GENOMIC DNA]</scope>
    <source>
        <strain>1021</strain>
    </source>
</reference>
<reference key="2">
    <citation type="journal article" date="2001" name="Science">
        <title>The composite genome of the legume symbiont Sinorhizobium meliloti.</title>
        <authorList>
            <person name="Galibert F."/>
            <person name="Finan T.M."/>
            <person name="Long S.R."/>
            <person name="Puehler A."/>
            <person name="Abola P."/>
            <person name="Ampe F."/>
            <person name="Barloy-Hubler F."/>
            <person name="Barnett M.J."/>
            <person name="Becker A."/>
            <person name="Boistard P."/>
            <person name="Bothe G."/>
            <person name="Boutry M."/>
            <person name="Bowser L."/>
            <person name="Buhrmester J."/>
            <person name="Cadieu E."/>
            <person name="Capela D."/>
            <person name="Chain P."/>
            <person name="Cowie A."/>
            <person name="Davis R.W."/>
            <person name="Dreano S."/>
            <person name="Federspiel N.A."/>
            <person name="Fisher R.F."/>
            <person name="Gloux S."/>
            <person name="Godrie T."/>
            <person name="Goffeau A."/>
            <person name="Golding B."/>
            <person name="Gouzy J."/>
            <person name="Gurjal M."/>
            <person name="Hernandez-Lucas I."/>
            <person name="Hong A."/>
            <person name="Huizar L."/>
            <person name="Hyman R.W."/>
            <person name="Jones T."/>
            <person name="Kahn D."/>
            <person name="Kahn M.L."/>
            <person name="Kalman S."/>
            <person name="Keating D.H."/>
            <person name="Kiss E."/>
            <person name="Komp C."/>
            <person name="Lelaure V."/>
            <person name="Masuy D."/>
            <person name="Palm C."/>
            <person name="Peck M.C."/>
            <person name="Pohl T.M."/>
            <person name="Portetelle D."/>
            <person name="Purnelle B."/>
            <person name="Ramsperger U."/>
            <person name="Surzycki R."/>
            <person name="Thebault P."/>
            <person name="Vandenbol M."/>
            <person name="Vorhoelter F.J."/>
            <person name="Weidner S."/>
            <person name="Wells D.H."/>
            <person name="Wong K."/>
            <person name="Yeh K.-C."/>
            <person name="Batut J."/>
        </authorList>
    </citation>
    <scope>NUCLEOTIDE SEQUENCE [LARGE SCALE GENOMIC DNA]</scope>
    <source>
        <strain>1021</strain>
    </source>
</reference>
<name>GLGB_RHIME</name>